<organism>
    <name type="scientific">Helicobacter pylori (strain ATCC 700392 / 26695)</name>
    <name type="common">Campylobacter pylori</name>
    <dbReference type="NCBI Taxonomy" id="85962"/>
    <lineage>
        <taxon>Bacteria</taxon>
        <taxon>Pseudomonadati</taxon>
        <taxon>Campylobacterota</taxon>
        <taxon>Epsilonproteobacteria</taxon>
        <taxon>Campylobacterales</taxon>
        <taxon>Helicobacteraceae</taxon>
        <taxon>Helicobacter</taxon>
    </lineage>
</organism>
<reference key="1">
    <citation type="journal article" date="1997" name="Nature">
        <title>The complete genome sequence of the gastric pathogen Helicobacter pylori.</title>
        <authorList>
            <person name="Tomb J.-F."/>
            <person name="White O."/>
            <person name="Kerlavage A.R."/>
            <person name="Clayton R.A."/>
            <person name="Sutton G.G."/>
            <person name="Fleischmann R.D."/>
            <person name="Ketchum K.A."/>
            <person name="Klenk H.-P."/>
            <person name="Gill S.R."/>
            <person name="Dougherty B.A."/>
            <person name="Nelson K.E."/>
            <person name="Quackenbush J."/>
            <person name="Zhou L."/>
            <person name="Kirkness E.F."/>
            <person name="Peterson S.N."/>
            <person name="Loftus B.J."/>
            <person name="Richardson D.L."/>
            <person name="Dodson R.J."/>
            <person name="Khalak H.G."/>
            <person name="Glodek A."/>
            <person name="McKenney K."/>
            <person name="FitzGerald L.M."/>
            <person name="Lee N."/>
            <person name="Adams M.D."/>
            <person name="Hickey E.K."/>
            <person name="Berg D.E."/>
            <person name="Gocayne J.D."/>
            <person name="Utterback T.R."/>
            <person name="Peterson J.D."/>
            <person name="Kelley J.M."/>
            <person name="Cotton M.D."/>
            <person name="Weidman J.F."/>
            <person name="Fujii C."/>
            <person name="Bowman C."/>
            <person name="Watthey L."/>
            <person name="Wallin E."/>
            <person name="Hayes W.S."/>
            <person name="Borodovsky M."/>
            <person name="Karp P.D."/>
            <person name="Smith H.O."/>
            <person name="Fraser C.M."/>
            <person name="Venter J.C."/>
        </authorList>
    </citation>
    <scope>NUCLEOTIDE SEQUENCE [LARGE SCALE GENOMIC DNA]</scope>
    <source>
        <strain>ATCC 700392 / 26695</strain>
    </source>
</reference>
<accession>O26106</accession>
<dbReference type="EMBL" id="AE000511">
    <property type="protein sequence ID" value="AAD08626.1"/>
    <property type="status" value="ALT_FRAME"/>
    <property type="molecule type" value="Genomic_DNA"/>
</dbReference>
<dbReference type="PIR" id="C64718">
    <property type="entry name" value="C64718"/>
</dbReference>
<dbReference type="FunCoup" id="O26106">
    <property type="interactions" value="7"/>
</dbReference>
<dbReference type="IntAct" id="O26106">
    <property type="interactions" value="1"/>
</dbReference>
<dbReference type="EnsemblBacteria" id="AAD08626">
    <property type="protein sequence ID" value="AAD08626"/>
    <property type="gene ID" value="HP_1587"/>
</dbReference>
<dbReference type="KEGG" id="hpy:HP_1587"/>
<dbReference type="InParanoid" id="O26106"/>
<dbReference type="PhylomeDB" id="O26106"/>
<dbReference type="Proteomes" id="UP000000429">
    <property type="component" value="Chromosome"/>
</dbReference>
<dbReference type="InterPro" id="IPR021150">
    <property type="entry name" value="Ubiq_cyt_c_chap"/>
</dbReference>
<dbReference type="Pfam" id="PF03981">
    <property type="entry name" value="Ubiq_cyt_C_chap"/>
    <property type="match status" value="1"/>
</dbReference>
<comment type="similarity">
    <text evidence="1">Belongs to the UPF0174 family.</text>
</comment>
<comment type="sequence caution" evidence="1">
    <conflict type="frameshift">
        <sequence resource="EMBL-CDS" id="AAD08626"/>
    </conflict>
</comment>
<sequence length="209" mass="23070">MNEDLTNSTEYKRYGHDYAKYPRRIAEELQHYGGNSFANFFRDEGVLYKEILCDACDHLKVNYNEESATSLIEQNMLSKLLKDSLEKMSRREIKELCNELGMTNIDKVIGENKQVLIASTLTLFKAGGSHSYALAVSVADAMVRQTLGHXACYVVGKVALKKTLGVLAGPIGWVITGALVSINLAGPAYRVTVPACVLIATLRLKLKAK</sequence>
<name>Y1587_HELPY</name>
<evidence type="ECO:0000305" key="1"/>
<feature type="chain" id="PRO_0000216421" description="UPF0174 protein HP_1587">
    <location>
        <begin position="1"/>
        <end position="209"/>
    </location>
</feature>
<gene>
    <name type="ordered locus">HP_1587</name>
</gene>
<proteinExistence type="inferred from homology"/>
<protein>
    <recommendedName>
        <fullName>UPF0174 protein HP_1587</fullName>
    </recommendedName>
</protein>
<keyword id="KW-1185">Reference proteome</keyword>